<comment type="function">
    <text evidence="1">Part of the accessory SecA2/SecY2 system specifically required for export of possible cell wall proteins. The central subunit of a protein translocation channel.</text>
</comment>
<comment type="subunit">
    <text evidence="1">Component of the accessory SecA2/SecY2 protein translocase complex required to export cell wall proteins. May form heterotrimers with SecE and SecG subunits.</text>
</comment>
<comment type="subcellular location">
    <subcellularLocation>
        <location evidence="1">Cell membrane</location>
        <topology evidence="1">Multi-pass membrane protein</topology>
    </subcellularLocation>
</comment>
<comment type="similarity">
    <text evidence="1">Belongs to the SecY/SEC61-alpha family. SecY2 subfamily.</text>
</comment>
<keyword id="KW-1003">Cell membrane</keyword>
<keyword id="KW-0472">Membrane</keyword>
<keyword id="KW-0653">Protein transport</keyword>
<keyword id="KW-0811">Translocation</keyword>
<keyword id="KW-0812">Transmembrane</keyword>
<keyword id="KW-1133">Transmembrane helix</keyword>
<keyword id="KW-0813">Transport</keyword>
<protein>
    <recommendedName>
        <fullName evidence="1">Accessory Sec system protein translocase subunit SecY2</fullName>
    </recommendedName>
</protein>
<reference key="1">
    <citation type="journal article" date="2005" name="J. Bacteriol.">
        <title>Whole-genome sequencing of Staphylococcus haemolyticus uncovers the extreme plasticity of its genome and the evolution of human-colonizing staphylococcal species.</title>
        <authorList>
            <person name="Takeuchi F."/>
            <person name="Watanabe S."/>
            <person name="Baba T."/>
            <person name="Yuzawa H."/>
            <person name="Ito T."/>
            <person name="Morimoto Y."/>
            <person name="Kuroda M."/>
            <person name="Cui L."/>
            <person name="Takahashi M."/>
            <person name="Ankai A."/>
            <person name="Baba S."/>
            <person name="Fukui S."/>
            <person name="Lee J.C."/>
            <person name="Hiramatsu K."/>
        </authorList>
    </citation>
    <scope>NUCLEOTIDE SEQUENCE [LARGE SCALE GENOMIC DNA]</scope>
    <source>
        <strain>JCSC1435</strain>
    </source>
</reference>
<accession>Q4L9N9</accession>
<sequence length="399" mass="45864">MIKKHEYKILYKRILFTCFILIVYIFGSNISIVGSEGIYDNKDTFFKLAVSNVGGDLHTLNVFSLGLGPWLTSLVIIMLLNYRNLDQATKQTRSEKHYKERIITIVFAIFQSYFVISTYIHNNFIKDSNIILLMLILVAGTMLLVWLADQNITYGICGPMPIVLTSLIKSLFNNQHFFKLSVSVLLLILVIVTLVIALLILLFIELSEYRLNYKDIMNNSTNKTPTYLAWKLNPAGSISIMISLSVYVLLNNMINLIATLLGSNANFEFLSFANPIGIMFYIVLQIVLSYLLSRFLINTKKKADEFLKNGNYFDPIRPGRETERYLNSKARRVCWTGAILVALILAVPLYSTLLVPNLSTEIYFSMQLIILVYISINIGETIRTYLYFDRYKQILNKYW</sequence>
<name>SECY2_STAHJ</name>
<feature type="chain" id="PRO_0000414871" description="Accessory Sec system protein translocase subunit SecY2">
    <location>
        <begin position="1"/>
        <end position="399"/>
    </location>
</feature>
<feature type="transmembrane region" description="Helical" evidence="1">
    <location>
        <begin position="14"/>
        <end position="34"/>
    </location>
</feature>
<feature type="transmembrane region" description="Helical" evidence="1">
    <location>
        <begin position="60"/>
        <end position="80"/>
    </location>
</feature>
<feature type="transmembrane region" description="Helical" evidence="1">
    <location>
        <begin position="102"/>
        <end position="122"/>
    </location>
</feature>
<feature type="transmembrane region" description="Helical" evidence="1">
    <location>
        <begin position="128"/>
        <end position="148"/>
    </location>
</feature>
<feature type="transmembrane region" description="Helical" evidence="1">
    <location>
        <begin position="152"/>
        <end position="172"/>
    </location>
</feature>
<feature type="transmembrane region" description="Helical" evidence="1">
    <location>
        <begin position="184"/>
        <end position="204"/>
    </location>
</feature>
<feature type="transmembrane region" description="Helical" evidence="1">
    <location>
        <begin position="238"/>
        <end position="258"/>
    </location>
</feature>
<feature type="transmembrane region" description="Helical" evidence="1">
    <location>
        <begin position="272"/>
        <end position="292"/>
    </location>
</feature>
<feature type="transmembrane region" description="Helical" evidence="1">
    <location>
        <begin position="335"/>
        <end position="355"/>
    </location>
</feature>
<feature type="transmembrane region" description="Helical" evidence="1">
    <location>
        <begin position="362"/>
        <end position="382"/>
    </location>
</feature>
<proteinExistence type="inferred from homology"/>
<evidence type="ECO:0000255" key="1">
    <source>
        <dbReference type="HAMAP-Rule" id="MF_01466"/>
    </source>
</evidence>
<gene>
    <name evidence="1" type="primary">secY2</name>
    <name type="ordered locus">SH0327</name>
</gene>
<dbReference type="EMBL" id="AP006716">
    <property type="protein sequence ID" value="BAE03636.1"/>
    <property type="molecule type" value="Genomic_DNA"/>
</dbReference>
<dbReference type="RefSeq" id="WP_011274655.1">
    <property type="nucleotide sequence ID" value="NC_007168.1"/>
</dbReference>
<dbReference type="SMR" id="Q4L9N9"/>
<dbReference type="KEGG" id="sha:SH0327"/>
<dbReference type="eggNOG" id="COG0201">
    <property type="taxonomic scope" value="Bacteria"/>
</dbReference>
<dbReference type="HOGENOM" id="CLU_030313_4_0_9"/>
<dbReference type="OrthoDB" id="2055747at2"/>
<dbReference type="Proteomes" id="UP000000543">
    <property type="component" value="Chromosome"/>
</dbReference>
<dbReference type="GO" id="GO:0005886">
    <property type="term" value="C:plasma membrane"/>
    <property type="evidence" value="ECO:0007669"/>
    <property type="project" value="UniProtKB-SubCell"/>
</dbReference>
<dbReference type="GO" id="GO:0065002">
    <property type="term" value="P:intracellular protein transmembrane transport"/>
    <property type="evidence" value="ECO:0007669"/>
    <property type="project" value="UniProtKB-UniRule"/>
</dbReference>
<dbReference type="GO" id="GO:0006605">
    <property type="term" value="P:protein targeting"/>
    <property type="evidence" value="ECO:0007669"/>
    <property type="project" value="UniProtKB-UniRule"/>
</dbReference>
<dbReference type="Gene3D" id="1.10.3370.10">
    <property type="entry name" value="SecY subunit domain"/>
    <property type="match status" value="1"/>
</dbReference>
<dbReference type="HAMAP" id="MF_01466">
    <property type="entry name" value="SecY2"/>
    <property type="match status" value="1"/>
</dbReference>
<dbReference type="InterPro" id="IPR002208">
    <property type="entry name" value="SecY/SEC61-alpha"/>
</dbReference>
<dbReference type="InterPro" id="IPR014269">
    <property type="entry name" value="SecY2"/>
</dbReference>
<dbReference type="InterPro" id="IPR023201">
    <property type="entry name" value="SecY_dom_sf"/>
</dbReference>
<dbReference type="NCBIfam" id="TIGR02920">
    <property type="entry name" value="acc_sec_Y2"/>
    <property type="match status" value="1"/>
</dbReference>
<dbReference type="NCBIfam" id="NF009082">
    <property type="entry name" value="PRK12417.1"/>
    <property type="match status" value="1"/>
</dbReference>
<dbReference type="PANTHER" id="PTHR10906">
    <property type="entry name" value="SECY/SEC61-ALPHA FAMILY MEMBER"/>
    <property type="match status" value="1"/>
</dbReference>
<dbReference type="Pfam" id="PF00344">
    <property type="entry name" value="SecY"/>
    <property type="match status" value="1"/>
</dbReference>
<dbReference type="PIRSF" id="PIRSF004557">
    <property type="entry name" value="SecY"/>
    <property type="match status" value="1"/>
</dbReference>
<dbReference type="PRINTS" id="PR00303">
    <property type="entry name" value="SECYTRNLCASE"/>
</dbReference>
<dbReference type="SUPFAM" id="SSF103491">
    <property type="entry name" value="Preprotein translocase SecY subunit"/>
    <property type="match status" value="1"/>
</dbReference>
<organism>
    <name type="scientific">Staphylococcus haemolyticus (strain JCSC1435)</name>
    <dbReference type="NCBI Taxonomy" id="279808"/>
    <lineage>
        <taxon>Bacteria</taxon>
        <taxon>Bacillati</taxon>
        <taxon>Bacillota</taxon>
        <taxon>Bacilli</taxon>
        <taxon>Bacillales</taxon>
        <taxon>Staphylococcaceae</taxon>
        <taxon>Staphylococcus</taxon>
    </lineage>
</organism>